<comment type="function">
    <text evidence="1">Catalyzes the deamination of various vicinal amino-alcohols to oxo compounds. Allows this organism to utilize ethanolamine as the sole source of nitrogen and carbon in the presence of external vitamin B12.</text>
</comment>
<comment type="catalytic activity">
    <reaction evidence="1">
        <text>ethanolamine = acetaldehyde + NH4(+)</text>
        <dbReference type="Rhea" id="RHEA:15313"/>
        <dbReference type="ChEBI" id="CHEBI:15343"/>
        <dbReference type="ChEBI" id="CHEBI:28938"/>
        <dbReference type="ChEBI" id="CHEBI:57603"/>
        <dbReference type="EC" id="4.3.1.7"/>
    </reaction>
</comment>
<comment type="cofactor">
    <cofactor evidence="1">
        <name>adenosylcob(III)alamin</name>
        <dbReference type="ChEBI" id="CHEBI:18408"/>
    </cofactor>
    <text evidence="1">Binds between the large and small subunits.</text>
</comment>
<comment type="pathway">
    <text evidence="1">Amine and polyamine degradation; ethanolamine degradation.</text>
</comment>
<comment type="subunit">
    <text evidence="1">The basic unit is a heterodimer which dimerizes to form tetramers. The heterotetramers trimerize; 6 large subunits form a core ring with 6 small subunits projecting outwards.</text>
</comment>
<comment type="subcellular location">
    <subcellularLocation>
        <location evidence="1">Bacterial microcompartment</location>
    </subcellularLocation>
</comment>
<comment type="similarity">
    <text evidence="1">Belongs to the EutC family.</text>
</comment>
<protein>
    <recommendedName>
        <fullName evidence="1">Ethanolamine ammonia-lyase small subunit</fullName>
        <shortName evidence="1">EAL small subunit</shortName>
        <ecNumber evidence="1">4.3.1.7</ecNumber>
    </recommendedName>
</protein>
<keyword id="KW-1283">Bacterial microcompartment</keyword>
<keyword id="KW-0846">Cobalamin</keyword>
<keyword id="KW-0170">Cobalt</keyword>
<keyword id="KW-0456">Lyase</keyword>
<proteinExistence type="inferred from homology"/>
<dbReference type="EC" id="4.3.1.7" evidence="1"/>
<dbReference type="EMBL" id="CP001138">
    <property type="protein sequence ID" value="ACH52524.1"/>
    <property type="molecule type" value="Genomic_DNA"/>
</dbReference>
<dbReference type="RefSeq" id="WP_000372344.1">
    <property type="nucleotide sequence ID" value="NC_011149.1"/>
</dbReference>
<dbReference type="SMR" id="B5F0I6"/>
<dbReference type="KEGG" id="sea:SeAg_B2602"/>
<dbReference type="HOGENOM" id="CLU_068224_2_0_6"/>
<dbReference type="UniPathway" id="UPA00560"/>
<dbReference type="Proteomes" id="UP000008819">
    <property type="component" value="Chromosome"/>
</dbReference>
<dbReference type="GO" id="GO:0009350">
    <property type="term" value="C:ethanolamine ammonia-lyase complex"/>
    <property type="evidence" value="ECO:0007669"/>
    <property type="project" value="UniProtKB-UniRule"/>
</dbReference>
<dbReference type="GO" id="GO:0031471">
    <property type="term" value="C:ethanolamine degradation polyhedral organelle"/>
    <property type="evidence" value="ECO:0007669"/>
    <property type="project" value="UniProtKB-UniRule"/>
</dbReference>
<dbReference type="GO" id="GO:0031419">
    <property type="term" value="F:cobalamin binding"/>
    <property type="evidence" value="ECO:0007669"/>
    <property type="project" value="UniProtKB-UniRule"/>
</dbReference>
<dbReference type="GO" id="GO:0008851">
    <property type="term" value="F:ethanolamine ammonia-lyase activity"/>
    <property type="evidence" value="ECO:0007669"/>
    <property type="project" value="UniProtKB-UniRule"/>
</dbReference>
<dbReference type="GO" id="GO:0006520">
    <property type="term" value="P:amino acid metabolic process"/>
    <property type="evidence" value="ECO:0007669"/>
    <property type="project" value="InterPro"/>
</dbReference>
<dbReference type="GO" id="GO:0046336">
    <property type="term" value="P:ethanolamine catabolic process"/>
    <property type="evidence" value="ECO:0007669"/>
    <property type="project" value="UniProtKB-UniRule"/>
</dbReference>
<dbReference type="FunFam" id="3.40.50.11240:FF:000001">
    <property type="entry name" value="Ethanolamine ammonia-lyase light chain"/>
    <property type="match status" value="1"/>
</dbReference>
<dbReference type="Gene3D" id="6.10.140.690">
    <property type="match status" value="1"/>
</dbReference>
<dbReference type="Gene3D" id="6.10.250.2060">
    <property type="match status" value="1"/>
</dbReference>
<dbReference type="Gene3D" id="3.40.50.11240">
    <property type="entry name" value="Ethanolamine ammonia-lyase light chain (EutC)"/>
    <property type="match status" value="1"/>
</dbReference>
<dbReference type="HAMAP" id="MF_00601">
    <property type="entry name" value="EutC"/>
    <property type="match status" value="1"/>
</dbReference>
<dbReference type="InterPro" id="IPR009246">
    <property type="entry name" value="EutC"/>
</dbReference>
<dbReference type="InterPro" id="IPR042251">
    <property type="entry name" value="EutC_C"/>
</dbReference>
<dbReference type="NCBIfam" id="NF003971">
    <property type="entry name" value="PRK05465.1"/>
    <property type="match status" value="1"/>
</dbReference>
<dbReference type="PANTHER" id="PTHR39330">
    <property type="entry name" value="ETHANOLAMINE AMMONIA-LYASE LIGHT CHAIN"/>
    <property type="match status" value="1"/>
</dbReference>
<dbReference type="PANTHER" id="PTHR39330:SF1">
    <property type="entry name" value="ETHANOLAMINE AMMONIA-LYASE SMALL SUBUNIT"/>
    <property type="match status" value="1"/>
</dbReference>
<dbReference type="Pfam" id="PF05985">
    <property type="entry name" value="EutC"/>
    <property type="match status" value="1"/>
</dbReference>
<dbReference type="PIRSF" id="PIRSF018982">
    <property type="entry name" value="EutC"/>
    <property type="match status" value="1"/>
</dbReference>
<sequence>MDQKQIEEIVRSVMASMGQDVPQPVAPSTQAGAKPQCAAPTVTESCALDLGSAEAKAWIGVENPHRADVLTELRRSTAARVCTGRAGPRPRTQALLRFLADHSRSKDTVLKEVPEEWVKAQGLLEVRSEISDKNLYLTRPDMGRRLSPEAIDALKSQCVMNPDVQVVVSDGLSTDAITANYEEILPPLLAGLKQAGLNVGTPFFVRYGRVKIEDQIGEILGAKVVILLVGERPGLGQSESLSCYAVYSPRVATTVEADRTCISNIHQGGTPPVEAAAVIVDLAKRMLEQKASGINMTR</sequence>
<gene>
    <name evidence="1" type="primary">eutC</name>
    <name type="ordered locus">SeAg_B2602</name>
</gene>
<accession>B5F0I6</accession>
<name>EUTC_SALA4</name>
<evidence type="ECO:0000255" key="1">
    <source>
        <dbReference type="HAMAP-Rule" id="MF_00601"/>
    </source>
</evidence>
<feature type="chain" id="PRO_1000130097" description="Ethanolamine ammonia-lyase small subunit">
    <location>
        <begin position="1"/>
        <end position="298"/>
    </location>
</feature>
<feature type="binding site" evidence="1">
    <location>
        <position position="210"/>
    </location>
    <ligand>
        <name>adenosylcob(III)alamin</name>
        <dbReference type="ChEBI" id="CHEBI:18408"/>
    </ligand>
</feature>
<feature type="binding site" evidence="1">
    <location>
        <position position="231"/>
    </location>
    <ligand>
        <name>adenosylcob(III)alamin</name>
        <dbReference type="ChEBI" id="CHEBI:18408"/>
    </ligand>
</feature>
<feature type="binding site" evidence="1">
    <location>
        <position position="261"/>
    </location>
    <ligand>
        <name>adenosylcob(III)alamin</name>
        <dbReference type="ChEBI" id="CHEBI:18408"/>
    </ligand>
</feature>
<reference key="1">
    <citation type="journal article" date="2011" name="J. Bacteriol.">
        <title>Comparative genomics of 28 Salmonella enterica isolates: evidence for CRISPR-mediated adaptive sublineage evolution.</title>
        <authorList>
            <person name="Fricke W.F."/>
            <person name="Mammel M.K."/>
            <person name="McDermott P.F."/>
            <person name="Tartera C."/>
            <person name="White D.G."/>
            <person name="Leclerc J.E."/>
            <person name="Ravel J."/>
            <person name="Cebula T.A."/>
        </authorList>
    </citation>
    <scope>NUCLEOTIDE SEQUENCE [LARGE SCALE GENOMIC DNA]</scope>
    <source>
        <strain>SL483</strain>
    </source>
</reference>
<organism>
    <name type="scientific">Salmonella agona (strain SL483)</name>
    <dbReference type="NCBI Taxonomy" id="454166"/>
    <lineage>
        <taxon>Bacteria</taxon>
        <taxon>Pseudomonadati</taxon>
        <taxon>Pseudomonadota</taxon>
        <taxon>Gammaproteobacteria</taxon>
        <taxon>Enterobacterales</taxon>
        <taxon>Enterobacteriaceae</taxon>
        <taxon>Salmonella</taxon>
    </lineage>
</organism>